<accession>Q7MAX8</accession>
<organism>
    <name type="scientific">Photorhabdus laumondii subsp. laumondii (strain DSM 15139 / CIP 105565 / TT01)</name>
    <name type="common">Photorhabdus luminescens subsp. laumondii</name>
    <dbReference type="NCBI Taxonomy" id="243265"/>
    <lineage>
        <taxon>Bacteria</taxon>
        <taxon>Pseudomonadati</taxon>
        <taxon>Pseudomonadota</taxon>
        <taxon>Gammaproteobacteria</taxon>
        <taxon>Enterobacterales</taxon>
        <taxon>Morganellaceae</taxon>
        <taxon>Photorhabdus</taxon>
    </lineage>
</organism>
<gene>
    <name evidence="1" type="primary">miaA</name>
    <name type="ordered locus">plu4582</name>
</gene>
<proteinExistence type="inferred from homology"/>
<feature type="chain" id="PRO_0000163949" description="tRNA dimethylallyltransferase">
    <location>
        <begin position="1"/>
        <end position="313"/>
    </location>
</feature>
<feature type="region of interest" description="Interaction with substrate tRNA" evidence="1">
    <location>
        <begin position="42"/>
        <end position="45"/>
    </location>
</feature>
<feature type="region of interest" description="Interaction with substrate tRNA" evidence="1">
    <location>
        <begin position="166"/>
        <end position="170"/>
    </location>
</feature>
<feature type="region of interest" description="Interaction with substrate tRNA" evidence="1">
    <location>
        <begin position="247"/>
        <end position="252"/>
    </location>
</feature>
<feature type="region of interest" description="Interaction with substrate tRNA" evidence="1">
    <location>
        <begin position="280"/>
        <end position="287"/>
    </location>
</feature>
<feature type="binding site" evidence="1">
    <location>
        <begin position="17"/>
        <end position="24"/>
    </location>
    <ligand>
        <name>ATP</name>
        <dbReference type="ChEBI" id="CHEBI:30616"/>
    </ligand>
</feature>
<feature type="binding site" evidence="1">
    <location>
        <begin position="19"/>
        <end position="24"/>
    </location>
    <ligand>
        <name>substrate</name>
    </ligand>
</feature>
<feature type="site" description="Interaction with substrate tRNA" evidence="1">
    <location>
        <position position="108"/>
    </location>
</feature>
<feature type="site" description="Interaction with substrate tRNA" evidence="1">
    <location>
        <position position="130"/>
    </location>
</feature>
<reference key="1">
    <citation type="journal article" date="2003" name="Nat. Biotechnol.">
        <title>The genome sequence of the entomopathogenic bacterium Photorhabdus luminescens.</title>
        <authorList>
            <person name="Duchaud E."/>
            <person name="Rusniok C."/>
            <person name="Frangeul L."/>
            <person name="Buchrieser C."/>
            <person name="Givaudan A."/>
            <person name="Taourit S."/>
            <person name="Bocs S."/>
            <person name="Boursaux-Eude C."/>
            <person name="Chandler M."/>
            <person name="Charles J.-F."/>
            <person name="Dassa E."/>
            <person name="Derose R."/>
            <person name="Derzelle S."/>
            <person name="Freyssinet G."/>
            <person name="Gaudriault S."/>
            <person name="Medigue C."/>
            <person name="Lanois A."/>
            <person name="Powell K."/>
            <person name="Siguier P."/>
            <person name="Vincent R."/>
            <person name="Wingate V."/>
            <person name="Zouine M."/>
            <person name="Glaser P."/>
            <person name="Boemare N."/>
            <person name="Danchin A."/>
            <person name="Kunst F."/>
        </authorList>
    </citation>
    <scope>NUCLEOTIDE SEQUENCE [LARGE SCALE GENOMIC DNA]</scope>
    <source>
        <strain>DSM 15139 / CIP 105565 / TT01</strain>
    </source>
</reference>
<evidence type="ECO:0000255" key="1">
    <source>
        <dbReference type="HAMAP-Rule" id="MF_00185"/>
    </source>
</evidence>
<sequence>MSDQKTQHLPTAIFVMGPTASGKTALSVALRQHLPVELISVDSALIYRGMDIGTAKPTTEEQALAPHRLINILDPSQPYSAADFCHDALKEMAEITASGRIPLLVGGTMLYFKALLEGLSPLPSANPVIRAQIEQQAAEQGWDALHQQLQKIDPAAALRIHPNDPQRLSRALEVFLISGKTLTELTTLSGESLPYRVHQFAIAPAKRELLHQRIEARFHQMLESGFEEEVKALYARHDLHVDLPSIRCVGYRQMWSYLSGEIDYDEMIYRGICATRQLAKRQITWLRGWKSVHWLDSSQPEQALSTVMQVVSA</sequence>
<name>MIAA_PHOLL</name>
<protein>
    <recommendedName>
        <fullName evidence="1">tRNA dimethylallyltransferase</fullName>
        <ecNumber evidence="1">2.5.1.75</ecNumber>
    </recommendedName>
    <alternativeName>
        <fullName evidence="1">Dimethylallyl diphosphate:tRNA dimethylallyltransferase</fullName>
        <shortName evidence="1">DMAPP:tRNA dimethylallyltransferase</shortName>
        <shortName evidence="1">DMATase</shortName>
    </alternativeName>
    <alternativeName>
        <fullName evidence="1">Isopentenyl-diphosphate:tRNA isopentenyltransferase</fullName>
        <shortName evidence="1">IPP transferase</shortName>
        <shortName evidence="1">IPPT</shortName>
        <shortName evidence="1">IPTase</shortName>
    </alternativeName>
</protein>
<keyword id="KW-0067">ATP-binding</keyword>
<keyword id="KW-0460">Magnesium</keyword>
<keyword id="KW-0547">Nucleotide-binding</keyword>
<keyword id="KW-1185">Reference proteome</keyword>
<keyword id="KW-0808">Transferase</keyword>
<keyword id="KW-0819">tRNA processing</keyword>
<dbReference type="EC" id="2.5.1.75" evidence="1"/>
<dbReference type="EMBL" id="BX571874">
    <property type="protein sequence ID" value="CAE16954.1"/>
    <property type="molecule type" value="Genomic_DNA"/>
</dbReference>
<dbReference type="RefSeq" id="WP_011148655.1">
    <property type="nucleotide sequence ID" value="NC_005126.1"/>
</dbReference>
<dbReference type="SMR" id="Q7MAX8"/>
<dbReference type="STRING" id="243265.plu4582"/>
<dbReference type="GeneID" id="48850794"/>
<dbReference type="KEGG" id="plu:plu4582"/>
<dbReference type="eggNOG" id="COG0324">
    <property type="taxonomic scope" value="Bacteria"/>
</dbReference>
<dbReference type="HOGENOM" id="CLU_032616_0_0_6"/>
<dbReference type="OrthoDB" id="9776390at2"/>
<dbReference type="Proteomes" id="UP000002514">
    <property type="component" value="Chromosome"/>
</dbReference>
<dbReference type="GO" id="GO:0005524">
    <property type="term" value="F:ATP binding"/>
    <property type="evidence" value="ECO:0007669"/>
    <property type="project" value="UniProtKB-UniRule"/>
</dbReference>
<dbReference type="GO" id="GO:0052381">
    <property type="term" value="F:tRNA dimethylallyltransferase activity"/>
    <property type="evidence" value="ECO:0007669"/>
    <property type="project" value="UniProtKB-UniRule"/>
</dbReference>
<dbReference type="GO" id="GO:0006400">
    <property type="term" value="P:tRNA modification"/>
    <property type="evidence" value="ECO:0007669"/>
    <property type="project" value="TreeGrafter"/>
</dbReference>
<dbReference type="FunFam" id="1.10.20.140:FF:000001">
    <property type="entry name" value="tRNA dimethylallyltransferase"/>
    <property type="match status" value="1"/>
</dbReference>
<dbReference type="Gene3D" id="1.10.20.140">
    <property type="match status" value="1"/>
</dbReference>
<dbReference type="Gene3D" id="3.40.50.300">
    <property type="entry name" value="P-loop containing nucleotide triphosphate hydrolases"/>
    <property type="match status" value="1"/>
</dbReference>
<dbReference type="HAMAP" id="MF_00185">
    <property type="entry name" value="IPP_trans"/>
    <property type="match status" value="1"/>
</dbReference>
<dbReference type="InterPro" id="IPR039657">
    <property type="entry name" value="Dimethylallyltransferase"/>
</dbReference>
<dbReference type="InterPro" id="IPR018022">
    <property type="entry name" value="IPT"/>
</dbReference>
<dbReference type="InterPro" id="IPR027417">
    <property type="entry name" value="P-loop_NTPase"/>
</dbReference>
<dbReference type="NCBIfam" id="TIGR00174">
    <property type="entry name" value="miaA"/>
    <property type="match status" value="1"/>
</dbReference>
<dbReference type="PANTHER" id="PTHR11088">
    <property type="entry name" value="TRNA DIMETHYLALLYLTRANSFERASE"/>
    <property type="match status" value="1"/>
</dbReference>
<dbReference type="PANTHER" id="PTHR11088:SF60">
    <property type="entry name" value="TRNA DIMETHYLALLYLTRANSFERASE"/>
    <property type="match status" value="1"/>
</dbReference>
<dbReference type="Pfam" id="PF01715">
    <property type="entry name" value="IPPT"/>
    <property type="match status" value="1"/>
</dbReference>
<dbReference type="SUPFAM" id="SSF52540">
    <property type="entry name" value="P-loop containing nucleoside triphosphate hydrolases"/>
    <property type="match status" value="1"/>
</dbReference>
<comment type="function">
    <text evidence="1">Catalyzes the transfer of a dimethylallyl group onto the adenine at position 37 in tRNAs that read codons beginning with uridine, leading to the formation of N6-(dimethylallyl)adenosine (i(6)A).</text>
</comment>
<comment type="catalytic activity">
    <reaction evidence="1">
        <text>adenosine(37) in tRNA + dimethylallyl diphosphate = N(6)-dimethylallyladenosine(37) in tRNA + diphosphate</text>
        <dbReference type="Rhea" id="RHEA:26482"/>
        <dbReference type="Rhea" id="RHEA-COMP:10162"/>
        <dbReference type="Rhea" id="RHEA-COMP:10375"/>
        <dbReference type="ChEBI" id="CHEBI:33019"/>
        <dbReference type="ChEBI" id="CHEBI:57623"/>
        <dbReference type="ChEBI" id="CHEBI:74411"/>
        <dbReference type="ChEBI" id="CHEBI:74415"/>
        <dbReference type="EC" id="2.5.1.75"/>
    </reaction>
</comment>
<comment type="cofactor">
    <cofactor evidence="1">
        <name>Mg(2+)</name>
        <dbReference type="ChEBI" id="CHEBI:18420"/>
    </cofactor>
</comment>
<comment type="subunit">
    <text evidence="1">Monomer.</text>
</comment>
<comment type="similarity">
    <text evidence="1">Belongs to the IPP transferase family.</text>
</comment>